<sequence>MNQTRVLLIFSWLTVATLLWMDWSKNKNETLEISASHNLGVDSNLELEHAVPQIHAGAVPLQKDSQLIAAAPKVPVINVTTDVLQLKLDGFSILAADLLRFPQSKDRGAKPIKLLTDDPNYPYSATTGWVSQSNSPVPNLSTFLPEQPDVSYKLANDQNRLVVPFIWTAANGVSIRRTFTFERGRYAILIRDEIRNSGETPWNAYVFRKLSRVPIPNILNRAMTNPDSFSFNGAVWYSEKGGYERRAFKDYMNDGGLNREIGGGWIALLQHHFFTAWIPQKDQASLYLLAQNGSRDIAELRGPAFTVAPGQTTTTEARLWVGPKLVEQITKEHVKGLDRVVDYSRFQLMALIGQGLFWILSHLNSLLHNWGWAIVGLVVLLRIAMYPLSASQYKSAAKMRKFQPRLQQLKERYGEDRQKFQQAMMELYKKEKINPMGGCFPILIQMPIFFALYWVLVESVELRQAPWLGWIQDLTTRDPYFILPLLNIVIMWATQKLTPTPAGMDPIAGKMMQVMPLIFGVMMAFVPSGLALYWVINGGLNLLIQWWMIRQHADFSRKRSRENIK</sequence>
<name>YIDC_XYLF2</name>
<feature type="chain" id="PRO_1000187717" description="Membrane protein insertase YidC">
    <location>
        <begin position="1"/>
        <end position="565"/>
    </location>
</feature>
<feature type="transmembrane region" description="Helical" evidence="1">
    <location>
        <begin position="6"/>
        <end position="26"/>
    </location>
</feature>
<feature type="transmembrane region" description="Helical" evidence="1">
    <location>
        <begin position="348"/>
        <end position="368"/>
    </location>
</feature>
<feature type="transmembrane region" description="Helical" evidence="1">
    <location>
        <begin position="370"/>
        <end position="390"/>
    </location>
</feature>
<feature type="transmembrane region" description="Helical" evidence="1">
    <location>
        <begin position="437"/>
        <end position="457"/>
    </location>
</feature>
<feature type="transmembrane region" description="Helical" evidence="1">
    <location>
        <begin position="479"/>
        <end position="499"/>
    </location>
</feature>
<feature type="transmembrane region" description="Helical" evidence="1">
    <location>
        <begin position="516"/>
        <end position="536"/>
    </location>
</feature>
<accession>B2IAR7</accession>
<gene>
    <name evidence="1" type="primary">yidC</name>
    <name type="ordered locus">XfasM23_2224</name>
</gene>
<keyword id="KW-0997">Cell inner membrane</keyword>
<keyword id="KW-1003">Cell membrane</keyword>
<keyword id="KW-0143">Chaperone</keyword>
<keyword id="KW-0472">Membrane</keyword>
<keyword id="KW-0653">Protein transport</keyword>
<keyword id="KW-0812">Transmembrane</keyword>
<keyword id="KW-1133">Transmembrane helix</keyword>
<keyword id="KW-0813">Transport</keyword>
<dbReference type="EMBL" id="CP001011">
    <property type="protein sequence ID" value="ACB93617.1"/>
    <property type="molecule type" value="Genomic_DNA"/>
</dbReference>
<dbReference type="RefSeq" id="WP_004087831.1">
    <property type="nucleotide sequence ID" value="NC_010577.1"/>
</dbReference>
<dbReference type="SMR" id="B2IAR7"/>
<dbReference type="GeneID" id="93905996"/>
<dbReference type="KEGG" id="xfn:XfasM23_2224"/>
<dbReference type="HOGENOM" id="CLU_016535_3_0_6"/>
<dbReference type="Proteomes" id="UP000001698">
    <property type="component" value="Chromosome"/>
</dbReference>
<dbReference type="GO" id="GO:0005886">
    <property type="term" value="C:plasma membrane"/>
    <property type="evidence" value="ECO:0007669"/>
    <property type="project" value="UniProtKB-SubCell"/>
</dbReference>
<dbReference type="GO" id="GO:0032977">
    <property type="term" value="F:membrane insertase activity"/>
    <property type="evidence" value="ECO:0007669"/>
    <property type="project" value="InterPro"/>
</dbReference>
<dbReference type="GO" id="GO:0051205">
    <property type="term" value="P:protein insertion into membrane"/>
    <property type="evidence" value="ECO:0007669"/>
    <property type="project" value="TreeGrafter"/>
</dbReference>
<dbReference type="GO" id="GO:0015031">
    <property type="term" value="P:protein transport"/>
    <property type="evidence" value="ECO:0007669"/>
    <property type="project" value="UniProtKB-KW"/>
</dbReference>
<dbReference type="CDD" id="cd20070">
    <property type="entry name" value="5TM_YidC_Alb3"/>
    <property type="match status" value="1"/>
</dbReference>
<dbReference type="CDD" id="cd19961">
    <property type="entry name" value="EcYidC-like_peri"/>
    <property type="match status" value="1"/>
</dbReference>
<dbReference type="Gene3D" id="2.70.98.90">
    <property type="match status" value="1"/>
</dbReference>
<dbReference type="HAMAP" id="MF_01810">
    <property type="entry name" value="YidC_type1"/>
    <property type="match status" value="1"/>
</dbReference>
<dbReference type="InterPro" id="IPR019998">
    <property type="entry name" value="Membr_insert_YidC"/>
</dbReference>
<dbReference type="InterPro" id="IPR028053">
    <property type="entry name" value="Membr_insert_YidC_N"/>
</dbReference>
<dbReference type="InterPro" id="IPR001708">
    <property type="entry name" value="YidC/ALB3/OXA1/COX18"/>
</dbReference>
<dbReference type="InterPro" id="IPR028055">
    <property type="entry name" value="YidC/Oxa/ALB_C"/>
</dbReference>
<dbReference type="InterPro" id="IPR047196">
    <property type="entry name" value="YidC_ALB_C"/>
</dbReference>
<dbReference type="InterPro" id="IPR038221">
    <property type="entry name" value="YidC_periplasmic_sf"/>
</dbReference>
<dbReference type="NCBIfam" id="NF002352">
    <property type="entry name" value="PRK01318.1-3"/>
    <property type="match status" value="1"/>
</dbReference>
<dbReference type="NCBIfam" id="TIGR03593">
    <property type="entry name" value="yidC_nterm"/>
    <property type="match status" value="1"/>
</dbReference>
<dbReference type="NCBIfam" id="TIGR03592">
    <property type="entry name" value="yidC_oxa1_cterm"/>
    <property type="match status" value="1"/>
</dbReference>
<dbReference type="PANTHER" id="PTHR12428:SF65">
    <property type="entry name" value="CYTOCHROME C OXIDASE ASSEMBLY PROTEIN COX18, MITOCHONDRIAL"/>
    <property type="match status" value="1"/>
</dbReference>
<dbReference type="PANTHER" id="PTHR12428">
    <property type="entry name" value="OXA1"/>
    <property type="match status" value="1"/>
</dbReference>
<dbReference type="Pfam" id="PF02096">
    <property type="entry name" value="60KD_IMP"/>
    <property type="match status" value="1"/>
</dbReference>
<dbReference type="Pfam" id="PF14849">
    <property type="entry name" value="YidC_periplas"/>
    <property type="match status" value="1"/>
</dbReference>
<dbReference type="PRINTS" id="PR00701">
    <property type="entry name" value="60KDINNERMP"/>
</dbReference>
<dbReference type="PRINTS" id="PR01900">
    <property type="entry name" value="YIDCPROTEIN"/>
</dbReference>
<comment type="function">
    <text evidence="1">Required for the insertion and/or proper folding and/or complex formation of integral membrane proteins into the membrane. Involved in integration of membrane proteins that insert both dependently and independently of the Sec translocase complex, as well as at least some lipoproteins. Aids folding of multispanning membrane proteins.</text>
</comment>
<comment type="subunit">
    <text evidence="1">Interacts with the Sec translocase complex via SecD. Specifically interacts with transmembrane segments of nascent integral membrane proteins during membrane integration.</text>
</comment>
<comment type="subcellular location">
    <subcellularLocation>
        <location evidence="1">Cell inner membrane</location>
        <topology evidence="1">Multi-pass membrane protein</topology>
    </subcellularLocation>
</comment>
<comment type="similarity">
    <text evidence="1">Belongs to the OXA1/ALB3/YidC family. Type 1 subfamily.</text>
</comment>
<proteinExistence type="inferred from homology"/>
<organism>
    <name type="scientific">Xylella fastidiosa (strain M23)</name>
    <dbReference type="NCBI Taxonomy" id="405441"/>
    <lineage>
        <taxon>Bacteria</taxon>
        <taxon>Pseudomonadati</taxon>
        <taxon>Pseudomonadota</taxon>
        <taxon>Gammaproteobacteria</taxon>
        <taxon>Lysobacterales</taxon>
        <taxon>Lysobacteraceae</taxon>
        <taxon>Xylella</taxon>
    </lineage>
</organism>
<reference key="1">
    <citation type="journal article" date="2010" name="J. Bacteriol.">
        <title>Whole genome sequences of two Xylella fastidiosa strains (M12 and M23) causing almond leaf scorch disease in California.</title>
        <authorList>
            <person name="Chen J."/>
            <person name="Xie G."/>
            <person name="Han S."/>
            <person name="Chertkov O."/>
            <person name="Sims D."/>
            <person name="Civerolo E.L."/>
        </authorList>
    </citation>
    <scope>NUCLEOTIDE SEQUENCE [LARGE SCALE GENOMIC DNA]</scope>
    <source>
        <strain>M23</strain>
    </source>
</reference>
<protein>
    <recommendedName>
        <fullName evidence="1">Membrane protein insertase YidC</fullName>
    </recommendedName>
    <alternativeName>
        <fullName evidence="1">Foldase YidC</fullName>
    </alternativeName>
    <alternativeName>
        <fullName evidence="1">Membrane integrase YidC</fullName>
    </alternativeName>
    <alternativeName>
        <fullName evidence="1">Membrane protein YidC</fullName>
    </alternativeName>
</protein>
<evidence type="ECO:0000255" key="1">
    <source>
        <dbReference type="HAMAP-Rule" id="MF_01810"/>
    </source>
</evidence>